<reference key="1">
    <citation type="journal article" date="2000" name="Nature">
        <title>Sequence and analysis of chromosome 5 of the plant Arabidopsis thaliana.</title>
        <authorList>
            <person name="Tabata S."/>
            <person name="Kaneko T."/>
            <person name="Nakamura Y."/>
            <person name="Kotani H."/>
            <person name="Kato T."/>
            <person name="Asamizu E."/>
            <person name="Miyajima N."/>
            <person name="Sasamoto S."/>
            <person name="Kimura T."/>
            <person name="Hosouchi T."/>
            <person name="Kawashima K."/>
            <person name="Kohara M."/>
            <person name="Matsumoto M."/>
            <person name="Matsuno A."/>
            <person name="Muraki A."/>
            <person name="Nakayama S."/>
            <person name="Nakazaki N."/>
            <person name="Naruo K."/>
            <person name="Okumura S."/>
            <person name="Shinpo S."/>
            <person name="Takeuchi C."/>
            <person name="Wada T."/>
            <person name="Watanabe A."/>
            <person name="Yamada M."/>
            <person name="Yasuda M."/>
            <person name="Sato S."/>
            <person name="de la Bastide M."/>
            <person name="Huang E."/>
            <person name="Spiegel L."/>
            <person name="Gnoj L."/>
            <person name="O'Shaughnessy A."/>
            <person name="Preston R."/>
            <person name="Habermann K."/>
            <person name="Murray J."/>
            <person name="Johnson D."/>
            <person name="Rohlfing T."/>
            <person name="Nelson J."/>
            <person name="Stoneking T."/>
            <person name="Pepin K."/>
            <person name="Spieth J."/>
            <person name="Sekhon M."/>
            <person name="Armstrong J."/>
            <person name="Becker M."/>
            <person name="Belter E."/>
            <person name="Cordum H."/>
            <person name="Cordes M."/>
            <person name="Courtney L."/>
            <person name="Courtney W."/>
            <person name="Dante M."/>
            <person name="Du H."/>
            <person name="Edwards J."/>
            <person name="Fryman J."/>
            <person name="Haakensen B."/>
            <person name="Lamar E."/>
            <person name="Latreille P."/>
            <person name="Leonard S."/>
            <person name="Meyer R."/>
            <person name="Mulvaney E."/>
            <person name="Ozersky P."/>
            <person name="Riley A."/>
            <person name="Strowmatt C."/>
            <person name="Wagner-McPherson C."/>
            <person name="Wollam A."/>
            <person name="Yoakum M."/>
            <person name="Bell M."/>
            <person name="Dedhia N."/>
            <person name="Parnell L."/>
            <person name="Shah R."/>
            <person name="Rodriguez M."/>
            <person name="Hoon See L."/>
            <person name="Vil D."/>
            <person name="Baker J."/>
            <person name="Kirchoff K."/>
            <person name="Toth K."/>
            <person name="King L."/>
            <person name="Bahret A."/>
            <person name="Miller B."/>
            <person name="Marra M.A."/>
            <person name="Martienssen R."/>
            <person name="McCombie W.R."/>
            <person name="Wilson R.K."/>
            <person name="Murphy G."/>
            <person name="Bancroft I."/>
            <person name="Volckaert G."/>
            <person name="Wambutt R."/>
            <person name="Duesterhoeft A."/>
            <person name="Stiekema W."/>
            <person name="Pohl T."/>
            <person name="Entian K.-D."/>
            <person name="Terryn N."/>
            <person name="Hartley N."/>
            <person name="Bent E."/>
            <person name="Johnson S."/>
            <person name="Langham S.-A."/>
            <person name="McCullagh B."/>
            <person name="Robben J."/>
            <person name="Grymonprez B."/>
            <person name="Zimmermann W."/>
            <person name="Ramsperger U."/>
            <person name="Wedler H."/>
            <person name="Balke K."/>
            <person name="Wedler E."/>
            <person name="Peters S."/>
            <person name="van Staveren M."/>
            <person name="Dirkse W."/>
            <person name="Mooijman P."/>
            <person name="Klein Lankhorst R."/>
            <person name="Weitzenegger T."/>
            <person name="Bothe G."/>
            <person name="Rose M."/>
            <person name="Hauf J."/>
            <person name="Berneiser S."/>
            <person name="Hempel S."/>
            <person name="Feldpausch M."/>
            <person name="Lamberth S."/>
            <person name="Villarroel R."/>
            <person name="Gielen J."/>
            <person name="Ardiles W."/>
            <person name="Bents O."/>
            <person name="Lemcke K."/>
            <person name="Kolesov G."/>
            <person name="Mayer K.F.X."/>
            <person name="Rudd S."/>
            <person name="Schoof H."/>
            <person name="Schueller C."/>
            <person name="Zaccaria P."/>
            <person name="Mewes H.-W."/>
            <person name="Bevan M."/>
            <person name="Fransz P.F."/>
        </authorList>
    </citation>
    <scope>NUCLEOTIDE SEQUENCE [LARGE SCALE GENOMIC DNA]</scope>
    <source>
        <strain>cv. Columbia</strain>
    </source>
</reference>
<reference key="2">
    <citation type="journal article" date="2017" name="Plant J.">
        <title>Araport11: a complete reannotation of the Arabidopsis thaliana reference genome.</title>
        <authorList>
            <person name="Cheng C.Y."/>
            <person name="Krishnakumar V."/>
            <person name="Chan A.P."/>
            <person name="Thibaud-Nissen F."/>
            <person name="Schobel S."/>
            <person name="Town C.D."/>
        </authorList>
    </citation>
    <scope>GENOME REANNOTATION</scope>
    <source>
        <strain>cv. Columbia</strain>
    </source>
</reference>
<reference key="3">
    <citation type="submission" date="2005-05" db="EMBL/GenBank/DDBJ databases">
        <authorList>
            <person name="Underwood B.A."/>
            <person name="Xiao Y.-L."/>
            <person name="Moskal W.A. Jr."/>
            <person name="Monaghan E.L."/>
            <person name="Wang W."/>
            <person name="Redman J.C."/>
            <person name="Wu H.C."/>
            <person name="Utterback T."/>
            <person name="Town C.D."/>
        </authorList>
    </citation>
    <scope>NUCLEOTIDE SEQUENCE [LARGE SCALE MRNA]</scope>
    <source>
        <strain>cv. Columbia</strain>
    </source>
</reference>
<reference key="4">
    <citation type="journal article" date="2002" name="J. Biol. Chem.">
        <title>Functional cloning and characterization of a plant efflux carrier for multidrug and heavy metal detoxification.</title>
        <authorList>
            <person name="Li L."/>
            <person name="He Z."/>
            <person name="Pandey G.K."/>
            <person name="Tsuchiya T."/>
            <person name="Luan S."/>
        </authorList>
    </citation>
    <scope>GENE FAMILY</scope>
    <scope>NOMENCLATURE</scope>
</reference>
<reference key="5">
    <citation type="journal article" date="2003" name="Eur. J. Biochem.">
        <title>The multidrug/oligosaccharidyl-lipid/polysaccharide (MOP) exporter superfamily.</title>
        <authorList>
            <person name="Hvorup R.N."/>
            <person name="Winnen B."/>
            <person name="Chang A.B."/>
            <person name="Jiang Y."/>
            <person name="Zhou X.F."/>
            <person name="Saier M.H. Jr."/>
        </authorList>
    </citation>
    <scope>GENE FAMILY</scope>
</reference>
<reference key="6">
    <citation type="journal article" date="2015" name="J. Exp. Bot.">
        <title>A subgroup of MATE transporter genes regulates hypocotyl cell elongation in Arabidopsis.</title>
        <authorList>
            <person name="Wang R."/>
            <person name="Liu X."/>
            <person name="Liang S."/>
            <person name="Ge Q."/>
            <person name="Li Y."/>
            <person name="Shao J."/>
            <person name="Qi Y."/>
            <person name="An L."/>
            <person name="Yu F."/>
        </authorList>
    </citation>
    <scope>TISSUE SPECIFICITY</scope>
    <scope>SUBCELLULAR LOCATION</scope>
    <scope>FUNCTION</scope>
</reference>
<evidence type="ECO:0000255" key="1"/>
<evidence type="ECO:0000269" key="2">
    <source>
    </source>
</evidence>
<evidence type="ECO:0000303" key="3">
    <source>
    </source>
</evidence>
<evidence type="ECO:0000303" key="4">
    <source>
    </source>
</evidence>
<evidence type="ECO:0000305" key="5"/>
<evidence type="ECO:0000312" key="6">
    <source>
        <dbReference type="Araport" id="AT5G19700"/>
    </source>
</evidence>
<evidence type="ECO:0000312" key="7">
    <source>
        <dbReference type="EMBL" id="AF296838"/>
    </source>
</evidence>
<accession>Q4PSF4</accession>
<sequence>METPNIISHTNLLSKIDLEKQNPAPIFPTITELKSEARSLFSLAFPTILAALILYARSAISMLFLGHIGELELAGGSLAIAFANITGYSVLAGLALGMDPLCSQAFGAGRPKLLSLTLQRTVLFLLTSSVVIVALWLNLGKIMIYLHQDPSISSLAQTYILCSIPDLLTNSFLHPLRIYLRAQGITSPLTLATLAGTIFHIPMNFFLVSYLGWGFMGVSMAAAASNLLVVIFLVAHVWIAGLHQPTWTRPSSECFKDWGPVVTLAIPSCIGVCLEWWWYEIMTVLCGLLIDPSTPVASMGILIQTTSLLYIFPSSLGLAVSTRVGNELGSNRPNKARLSAIVAVSFAGVMGLTASAFAWGVSDVWGWIFTNDVAIIKLTAAALPILGLCELGNCPQTVGCGVVRGTARPSMAANINLGAFYLVGTPVAVGLTFWAAYGFCGLWVGLLAAQICCAAMMLYVVATTDWEKEAIRARKLTCTEGVDVVITTTQTNGDLSEPLIYVVTVATD</sequence>
<keyword id="KW-0967">Endosome</keyword>
<keyword id="KW-0472">Membrane</keyword>
<keyword id="KW-1185">Reference proteome</keyword>
<keyword id="KW-0812">Transmembrane</keyword>
<keyword id="KW-1133">Transmembrane helix</keyword>
<keyword id="KW-0813">Transport</keyword>
<protein>
    <recommendedName>
        <fullName evidence="3">Protein DETOXIFICATION 52</fullName>
        <shortName evidence="3">AtDTX52</shortName>
    </recommendedName>
    <alternativeName>
        <fullName evidence="5">Multidrug and toxic compound extrusion protein 52</fullName>
        <shortName evidence="5">MATE protein 52</shortName>
    </alternativeName>
    <alternativeName>
        <fullName evidence="4">Protein ABNORMAL SHOOT 3-like 2</fullName>
    </alternativeName>
</protein>
<proteinExistence type="evidence at transcript level"/>
<dbReference type="EMBL" id="AF296838">
    <property type="status" value="NOT_ANNOTATED_CDS"/>
    <property type="molecule type" value="Genomic_DNA"/>
</dbReference>
<dbReference type="EMBL" id="CP002688">
    <property type="protein sequence ID" value="AED92739.1"/>
    <property type="molecule type" value="Genomic_DNA"/>
</dbReference>
<dbReference type="EMBL" id="DQ056682">
    <property type="protein sequence ID" value="AAY78828.1"/>
    <property type="molecule type" value="mRNA"/>
</dbReference>
<dbReference type="RefSeq" id="NP_197471.1">
    <property type="nucleotide sequence ID" value="NM_121975.2"/>
</dbReference>
<dbReference type="SMR" id="Q4PSF4"/>
<dbReference type="FunCoup" id="Q4PSF4">
    <property type="interactions" value="9"/>
</dbReference>
<dbReference type="IntAct" id="Q4PSF4">
    <property type="interactions" value="11"/>
</dbReference>
<dbReference type="STRING" id="3702.Q4PSF4"/>
<dbReference type="PaxDb" id="3702-AT5G19700.1"/>
<dbReference type="EnsemblPlants" id="AT5G19700.1">
    <property type="protein sequence ID" value="AT5G19700.1"/>
    <property type="gene ID" value="AT5G19700"/>
</dbReference>
<dbReference type="GeneID" id="832090"/>
<dbReference type="Gramene" id="AT5G19700.1">
    <property type="protein sequence ID" value="AT5G19700.1"/>
    <property type="gene ID" value="AT5G19700"/>
</dbReference>
<dbReference type="KEGG" id="ath:AT5G19700"/>
<dbReference type="Araport" id="AT5G19700"/>
<dbReference type="TAIR" id="AT5G19700">
    <property type="gene designation" value="ELS1"/>
</dbReference>
<dbReference type="eggNOG" id="KOG1347">
    <property type="taxonomic scope" value="Eukaryota"/>
</dbReference>
<dbReference type="HOGENOM" id="CLU_012893_1_0_1"/>
<dbReference type="InParanoid" id="Q4PSF4"/>
<dbReference type="OMA" id="KIMIYLH"/>
<dbReference type="PhylomeDB" id="Q4PSF4"/>
<dbReference type="PRO" id="PR:Q4PSF4"/>
<dbReference type="Proteomes" id="UP000006548">
    <property type="component" value="Chromosome 5"/>
</dbReference>
<dbReference type="ExpressionAtlas" id="Q4PSF4">
    <property type="expression patterns" value="baseline and differential"/>
</dbReference>
<dbReference type="GO" id="GO:0005770">
    <property type="term" value="C:late endosome"/>
    <property type="evidence" value="ECO:0000314"/>
    <property type="project" value="UniProtKB"/>
</dbReference>
<dbReference type="GO" id="GO:0031902">
    <property type="term" value="C:late endosome membrane"/>
    <property type="evidence" value="ECO:0007669"/>
    <property type="project" value="UniProtKB-SubCell"/>
</dbReference>
<dbReference type="GO" id="GO:0015297">
    <property type="term" value="F:antiporter activity"/>
    <property type="evidence" value="ECO:0007669"/>
    <property type="project" value="InterPro"/>
</dbReference>
<dbReference type="GO" id="GO:0042910">
    <property type="term" value="F:xenobiotic transmembrane transporter activity"/>
    <property type="evidence" value="ECO:0007669"/>
    <property type="project" value="InterPro"/>
</dbReference>
<dbReference type="GO" id="GO:0010150">
    <property type="term" value="P:leaf senescence"/>
    <property type="evidence" value="ECO:0000315"/>
    <property type="project" value="TAIR"/>
</dbReference>
<dbReference type="GO" id="GO:0010015">
    <property type="term" value="P:root morphogenesis"/>
    <property type="evidence" value="ECO:0000315"/>
    <property type="project" value="UniProtKB"/>
</dbReference>
<dbReference type="GO" id="GO:1990961">
    <property type="term" value="P:xenobiotic detoxification by transmembrane export across the plasma membrane"/>
    <property type="evidence" value="ECO:0007669"/>
    <property type="project" value="InterPro"/>
</dbReference>
<dbReference type="CDD" id="cd13132">
    <property type="entry name" value="MATE_eukaryotic"/>
    <property type="match status" value="1"/>
</dbReference>
<dbReference type="InterPro" id="IPR045069">
    <property type="entry name" value="MATE_euk"/>
</dbReference>
<dbReference type="InterPro" id="IPR002528">
    <property type="entry name" value="MATE_fam"/>
</dbReference>
<dbReference type="NCBIfam" id="TIGR00797">
    <property type="entry name" value="matE"/>
    <property type="match status" value="1"/>
</dbReference>
<dbReference type="PANTHER" id="PTHR11206">
    <property type="entry name" value="MULTIDRUG RESISTANCE PROTEIN"/>
    <property type="match status" value="1"/>
</dbReference>
<dbReference type="Pfam" id="PF01554">
    <property type="entry name" value="MatE"/>
    <property type="match status" value="2"/>
</dbReference>
<organism>
    <name type="scientific">Arabidopsis thaliana</name>
    <name type="common">Mouse-ear cress</name>
    <dbReference type="NCBI Taxonomy" id="3702"/>
    <lineage>
        <taxon>Eukaryota</taxon>
        <taxon>Viridiplantae</taxon>
        <taxon>Streptophyta</taxon>
        <taxon>Embryophyta</taxon>
        <taxon>Tracheophyta</taxon>
        <taxon>Spermatophyta</taxon>
        <taxon>Magnoliopsida</taxon>
        <taxon>eudicotyledons</taxon>
        <taxon>Gunneridae</taxon>
        <taxon>Pentapetalae</taxon>
        <taxon>rosids</taxon>
        <taxon>malvids</taxon>
        <taxon>Brassicales</taxon>
        <taxon>Brassicaceae</taxon>
        <taxon>Camelineae</taxon>
        <taxon>Arabidopsis</taxon>
    </lineage>
</organism>
<gene>
    <name evidence="3" type="primary">DTX52</name>
    <name evidence="4" type="synonym">ABS3L2</name>
    <name evidence="6" type="ordered locus">At5g19700</name>
    <name evidence="7" type="ORF">T29J13.120</name>
</gene>
<comment type="function">
    <text evidence="2">May act as a negative regulator of hypocotyl cell elongation in the light.</text>
</comment>
<comment type="subcellular location">
    <subcellularLocation>
        <location evidence="2">Late endosome membrane</location>
        <topology evidence="2">Multi-pass membrane protein</topology>
    </subcellularLocation>
</comment>
<comment type="tissue specificity">
    <text evidence="2">Detected in the part of the veins in cotyledons of 6-day-old seedlings and the basal parts of the petioles in older plants. Highly expressed in the vascular tissues of hypocotyl in dark-grown seedlings.</text>
</comment>
<comment type="miscellaneous">
    <text evidence="2">Overexpression of DTX52 alters shoot developmental programs leading to a loss of apical dominance phenotype.</text>
</comment>
<comment type="similarity">
    <text evidence="5">Belongs to the multi antimicrobial extrusion (MATE) (TC 2.A.66.1) family.</text>
</comment>
<name>DTX52_ARATH</name>
<feature type="chain" id="PRO_0000434086" description="Protein DETOXIFICATION 52">
    <location>
        <begin position="1"/>
        <end position="508"/>
    </location>
</feature>
<feature type="transmembrane region" description="Helical" evidence="1">
    <location>
        <begin position="48"/>
        <end position="68"/>
    </location>
</feature>
<feature type="transmembrane region" description="Helical" evidence="1">
    <location>
        <begin position="78"/>
        <end position="98"/>
    </location>
</feature>
<feature type="transmembrane region" description="Helical" evidence="1">
    <location>
        <begin position="122"/>
        <end position="142"/>
    </location>
</feature>
<feature type="transmembrane region" description="Helical" evidence="5">
    <location>
        <begin position="156"/>
        <end position="176"/>
    </location>
</feature>
<feature type="transmembrane region" description="Helical" evidence="1">
    <location>
        <begin position="189"/>
        <end position="209"/>
    </location>
</feature>
<feature type="transmembrane region" description="Helical" evidence="1">
    <location>
        <begin position="222"/>
        <end position="242"/>
    </location>
</feature>
<feature type="transmembrane region" description="Helical" evidence="1">
    <location>
        <begin position="270"/>
        <end position="290"/>
    </location>
</feature>
<feature type="transmembrane region" description="Helical" evidence="1">
    <location>
        <begin position="300"/>
        <end position="320"/>
    </location>
</feature>
<feature type="transmembrane region" description="Helical" evidence="1">
    <location>
        <begin position="341"/>
        <end position="361"/>
    </location>
</feature>
<feature type="transmembrane region" description="Helical" evidence="1">
    <location>
        <begin position="368"/>
        <end position="388"/>
    </location>
</feature>
<feature type="transmembrane region" description="Helical" evidence="1">
    <location>
        <begin position="415"/>
        <end position="437"/>
    </location>
</feature>
<feature type="transmembrane region" description="Helical" evidence="1">
    <location>
        <begin position="441"/>
        <end position="463"/>
    </location>
</feature>